<keyword id="KW-0238">DNA-binding</keyword>
<keyword id="KW-0479">Metal-binding</keyword>
<keyword id="KW-0539">Nucleus</keyword>
<keyword id="KW-0804">Transcription</keyword>
<keyword id="KW-0805">Transcription regulation</keyword>
<keyword id="KW-0862">Zinc</keyword>
<protein>
    <recommendedName>
        <fullName>Glucose starvation modulator protein 1</fullName>
    </recommendedName>
</protein>
<dbReference type="EMBL" id="CH408050">
    <property type="protein sequence ID" value="EDV12663.1"/>
    <property type="molecule type" value="Genomic_DNA"/>
</dbReference>
<dbReference type="HOGENOM" id="CLU_010748_2_2_1"/>
<dbReference type="OrthoDB" id="33448at4893"/>
<dbReference type="Proteomes" id="UP000008335">
    <property type="component" value="Unassembled WGS sequence"/>
</dbReference>
<dbReference type="GO" id="GO:0005634">
    <property type="term" value="C:nucleus"/>
    <property type="evidence" value="ECO:0007669"/>
    <property type="project" value="UniProtKB-SubCell"/>
</dbReference>
<dbReference type="GO" id="GO:0000981">
    <property type="term" value="F:DNA-binding transcription factor activity, RNA polymerase II-specific"/>
    <property type="evidence" value="ECO:0007669"/>
    <property type="project" value="InterPro"/>
</dbReference>
<dbReference type="GO" id="GO:0000977">
    <property type="term" value="F:RNA polymerase II transcription regulatory region sequence-specific DNA binding"/>
    <property type="evidence" value="ECO:0007669"/>
    <property type="project" value="TreeGrafter"/>
</dbReference>
<dbReference type="GO" id="GO:0008270">
    <property type="term" value="F:zinc ion binding"/>
    <property type="evidence" value="ECO:0007669"/>
    <property type="project" value="InterPro"/>
</dbReference>
<dbReference type="GO" id="GO:0009267">
    <property type="term" value="P:cellular response to starvation"/>
    <property type="evidence" value="ECO:0007669"/>
    <property type="project" value="TreeGrafter"/>
</dbReference>
<dbReference type="CDD" id="cd00067">
    <property type="entry name" value="GAL4"/>
    <property type="match status" value="1"/>
</dbReference>
<dbReference type="Gene3D" id="4.10.240.10">
    <property type="entry name" value="Zn(2)-C6 fungal-type DNA-binding domain"/>
    <property type="match status" value="1"/>
</dbReference>
<dbReference type="InterPro" id="IPR050335">
    <property type="entry name" value="ERT1_acuK_gluconeogen_tf"/>
</dbReference>
<dbReference type="InterPro" id="IPR056751">
    <property type="entry name" value="PAS_13"/>
</dbReference>
<dbReference type="InterPro" id="IPR036864">
    <property type="entry name" value="Zn2-C6_fun-type_DNA-bd_sf"/>
</dbReference>
<dbReference type="InterPro" id="IPR001138">
    <property type="entry name" value="Zn2Cys6_DnaBD"/>
</dbReference>
<dbReference type="PANTHER" id="PTHR47659:SF8">
    <property type="entry name" value="GLUCOSE STARVATION MODULATOR PROTEIN 1"/>
    <property type="match status" value="1"/>
</dbReference>
<dbReference type="PANTHER" id="PTHR47659">
    <property type="entry name" value="ZN(II)2CYS6 TRANSCRIPTION FACTOR (EUROFUNG)-RELATED"/>
    <property type="match status" value="1"/>
</dbReference>
<dbReference type="Pfam" id="PF24990">
    <property type="entry name" value="PAS_13"/>
    <property type="match status" value="1"/>
</dbReference>
<dbReference type="Pfam" id="PF00172">
    <property type="entry name" value="Zn_clus"/>
    <property type="match status" value="1"/>
</dbReference>
<dbReference type="SMART" id="SM00066">
    <property type="entry name" value="GAL4"/>
    <property type="match status" value="1"/>
</dbReference>
<dbReference type="SUPFAM" id="SSF57701">
    <property type="entry name" value="Zn2/Cys6 DNA-binding domain"/>
    <property type="match status" value="1"/>
</dbReference>
<dbReference type="PROSITE" id="PS00463">
    <property type="entry name" value="ZN2_CY6_FUNGAL_1"/>
    <property type="match status" value="1"/>
</dbReference>
<dbReference type="PROSITE" id="PS50048">
    <property type="entry name" value="ZN2_CY6_FUNGAL_2"/>
    <property type="match status" value="1"/>
</dbReference>
<comment type="function">
    <text evidence="1">Transcription factor which regulates nonfermentable carbon utilization. Binds specifically to 5'-CGGN(8)CGG-3' and 5'-CGGN(9)CGG-3' sequences in the promoter region (By similarity).</text>
</comment>
<comment type="subcellular location">
    <subcellularLocation>
        <location evidence="2">Nucleus</location>
    </subcellularLocation>
</comment>
<comment type="similarity">
    <text evidence="4">Belongs to the ERT1/acuK family.</text>
</comment>
<sequence length="618" mass="70283">MTKKLPSELKQTRKSIQTACEFCHTKHIQCDVGRPCQNCLKRNIGKFCRDKKRKSRKRIEKHGTQPYLNLGKRLVIHDVPSKTVSPSSVHLQRDFLSSDQEKPGKTPAHNTNIQYTYNINDNFQSAGSIPRITNFNTNNGQTVLENTSNNISASQAVHLMNDPIIPTVRKSTLNLKSHFLEQHKAMQQPLATNCLVATSNVPVHSGMDDSNKSDDDVDDETNIHFDSMWCNDEYMKLKDIVDISTPFLPNNSQIFSLQESEYPNPSASTRGNSSLHLTNLLNSTKSVNDQKDSSIGHSTSTFNTYDEVVSRPFISLDMLHLNRGANANTHPSHNAKLESECDSSSHSDADLEKHDTDFISPSKFRELVKTPQDLYDNKCLIKPHNYKLAYTKLLTTLRKKFLEGAEIDKSASVKDEHSTQKHNLRYDLEVIIRSILERYAPIFISLTSNMIEEDLLLQEVTLQRALLDLENMAKLVSCTPMCIWRRSGEICFVSNEFYSLTGFNKNLLLDRTSFIFEYLDHKSVSNYFQIFNELLAFGYNDINKRKKLLMLNACSSTSSKITEGFSFTTDGKAIFTKCNLLLSNGLYLKCACCWTVKRDSFNIPILVMGQFLPIFEMD</sequence>
<evidence type="ECO:0000250" key="1"/>
<evidence type="ECO:0000255" key="2">
    <source>
        <dbReference type="PROSITE-ProRule" id="PRU00227"/>
    </source>
</evidence>
<evidence type="ECO:0000256" key="3">
    <source>
        <dbReference type="SAM" id="MobiDB-lite"/>
    </source>
</evidence>
<evidence type="ECO:0000305" key="4"/>
<feature type="chain" id="PRO_0000406492" description="Glucose starvation modulator protein 1">
    <location>
        <begin position="1"/>
        <end position="618"/>
    </location>
</feature>
<feature type="domain" description="PAS">
    <location>
        <begin position="466"/>
        <end position="538"/>
    </location>
</feature>
<feature type="DNA-binding region" description="Zn(2)-C6 fungal-type" evidence="2">
    <location>
        <begin position="20"/>
        <end position="48"/>
    </location>
</feature>
<feature type="region of interest" description="Disordered" evidence="3">
    <location>
        <begin position="325"/>
        <end position="352"/>
    </location>
</feature>
<feature type="compositionally biased region" description="Basic and acidic residues" evidence="3">
    <location>
        <begin position="335"/>
        <end position="352"/>
    </location>
</feature>
<reference key="1">
    <citation type="submission" date="2005-03" db="EMBL/GenBank/DDBJ databases">
        <title>Annotation of the Saccharomyces cerevisiae RM11-1a genome.</title>
        <authorList>
            <consortium name="The Broad Institute Genome Sequencing Platform"/>
            <person name="Birren B.W."/>
            <person name="Lander E.S."/>
            <person name="Galagan J.E."/>
            <person name="Nusbaum C."/>
            <person name="Devon K."/>
            <person name="Cuomo C."/>
            <person name="Jaffe D.B."/>
            <person name="Butler J."/>
            <person name="Alvarez P."/>
            <person name="Gnerre S."/>
            <person name="Grabherr M."/>
            <person name="Kleber M."/>
            <person name="Mauceli E.W."/>
            <person name="Brockman W."/>
            <person name="MacCallum I.A."/>
            <person name="Rounsley S."/>
            <person name="Young S.K."/>
            <person name="LaButti K."/>
            <person name="Pushparaj V."/>
            <person name="DeCaprio D."/>
            <person name="Crawford M."/>
            <person name="Koehrsen M."/>
            <person name="Engels R."/>
            <person name="Montgomery P."/>
            <person name="Pearson M."/>
            <person name="Howarth C."/>
            <person name="Larson L."/>
            <person name="Luoma S."/>
            <person name="White J."/>
            <person name="O'Leary S."/>
            <person name="Kodira C.D."/>
            <person name="Zeng Q."/>
            <person name="Yandava C."/>
            <person name="Alvarado L."/>
            <person name="Pratt S."/>
            <person name="Kruglyak L."/>
        </authorList>
    </citation>
    <scope>NUCLEOTIDE SEQUENCE [LARGE SCALE GENOMIC DNA]</scope>
    <source>
        <strain>RM11-1a</strain>
    </source>
</reference>
<organism>
    <name type="scientific">Saccharomyces cerevisiae (strain RM11-1a)</name>
    <name type="common">Baker's yeast</name>
    <dbReference type="NCBI Taxonomy" id="285006"/>
    <lineage>
        <taxon>Eukaryota</taxon>
        <taxon>Fungi</taxon>
        <taxon>Dikarya</taxon>
        <taxon>Ascomycota</taxon>
        <taxon>Saccharomycotina</taxon>
        <taxon>Saccharomycetes</taxon>
        <taxon>Saccharomycetales</taxon>
        <taxon>Saccharomycetaceae</taxon>
        <taxon>Saccharomyces</taxon>
    </lineage>
</organism>
<accession>B3LQ10</accession>
<gene>
    <name type="primary">GSM1</name>
    <name type="ORF">SCRG_03568</name>
</gene>
<name>GSM1_YEAS1</name>
<proteinExistence type="inferred from homology"/>